<feature type="initiator methionine" description="Removed" evidence="3 4">
    <location>
        <position position="1"/>
    </location>
</feature>
<feature type="chain" id="PRO_0000132338" description="Small ribosomal subunit protein uS4">
    <location>
        <begin position="2"/>
        <end position="200"/>
    </location>
</feature>
<feature type="domain" description="S4 RNA-binding">
    <location>
        <begin position="92"/>
        <end position="152"/>
    </location>
</feature>
<feature type="region of interest" description="Disordered" evidence="2">
    <location>
        <begin position="22"/>
        <end position="42"/>
    </location>
</feature>
<feature type="sequence conflict" description="In Ref. 2; AA sequence." evidence="5" ref="2">
    <location>
        <position position="41"/>
    </location>
</feature>
<feature type="helix" evidence="6">
    <location>
        <begin position="46"/>
        <end position="59"/>
    </location>
</feature>
<feature type="turn" evidence="6">
    <location>
        <begin position="60"/>
        <end position="62"/>
    </location>
</feature>
<feature type="helix" evidence="6">
    <location>
        <begin position="65"/>
        <end position="75"/>
    </location>
</feature>
<feature type="strand" evidence="6">
    <location>
        <begin position="78"/>
        <end position="80"/>
    </location>
</feature>
<feature type="helix" evidence="6">
    <location>
        <begin position="82"/>
        <end position="92"/>
    </location>
</feature>
<feature type="helix" evidence="6">
    <location>
        <begin position="94"/>
        <end position="100"/>
    </location>
</feature>
<feature type="strand" evidence="7">
    <location>
        <begin position="103"/>
        <end position="106"/>
    </location>
</feature>
<feature type="helix" evidence="6">
    <location>
        <begin position="107"/>
        <end position="115"/>
    </location>
</feature>
<feature type="strand" evidence="6">
    <location>
        <begin position="119"/>
        <end position="121"/>
    </location>
</feature>
<feature type="strand" evidence="6">
    <location>
        <begin position="138"/>
        <end position="141"/>
    </location>
</feature>
<feature type="helix" evidence="6">
    <location>
        <begin position="143"/>
        <end position="145"/>
    </location>
</feature>
<feature type="helix" evidence="6">
    <location>
        <begin position="149"/>
        <end position="156"/>
    </location>
</feature>
<feature type="strand" evidence="6">
    <location>
        <begin position="163"/>
        <end position="168"/>
    </location>
</feature>
<feature type="turn" evidence="6">
    <location>
        <begin position="169"/>
        <end position="172"/>
    </location>
</feature>
<feature type="strand" evidence="6">
    <location>
        <begin position="173"/>
        <end position="176"/>
    </location>
</feature>
<feature type="turn" evidence="6">
    <location>
        <begin position="182"/>
        <end position="184"/>
    </location>
</feature>
<feature type="helix" evidence="6">
    <location>
        <begin position="192"/>
        <end position="199"/>
    </location>
</feature>
<name>RS4_GEOSE</name>
<proteinExistence type="evidence at protein level"/>
<comment type="function">
    <text evidence="1">One of the primary rRNA binding proteins, it binds directly to 16S rRNA where it nucleates assembly of the body of the 30S subunit.</text>
</comment>
<comment type="function">
    <text evidence="1">With S5 and S12 plays an important role in translational accuracy.</text>
</comment>
<comment type="subunit">
    <text evidence="1">Part of the 30S ribosomal subunit. Contacts protein S5. The interaction surface between S4 and S5 is involved in control of translational fidelity (By similarity).</text>
</comment>
<comment type="similarity">
    <text evidence="5">Belongs to the universal ribosomal protein uS4 family.</text>
</comment>
<accession>P81288</accession>
<dbReference type="PDB" id="1C05">
    <property type="method" value="NMR"/>
    <property type="chains" value="A=43-200"/>
</dbReference>
<dbReference type="PDB" id="1C06">
    <property type="method" value="NMR"/>
    <property type="chains" value="A=43-200"/>
</dbReference>
<dbReference type="PDBsum" id="1C05"/>
<dbReference type="PDBsum" id="1C06"/>
<dbReference type="BMRB" id="P81288"/>
<dbReference type="SMR" id="P81288"/>
<dbReference type="IntAct" id="P81288">
    <property type="interactions" value="1"/>
</dbReference>
<dbReference type="EvolutionaryTrace" id="P81288"/>
<dbReference type="GO" id="GO:0015935">
    <property type="term" value="C:small ribosomal subunit"/>
    <property type="evidence" value="ECO:0007669"/>
    <property type="project" value="InterPro"/>
</dbReference>
<dbReference type="GO" id="GO:0019843">
    <property type="term" value="F:rRNA binding"/>
    <property type="evidence" value="ECO:0007669"/>
    <property type="project" value="UniProtKB-UniRule"/>
</dbReference>
<dbReference type="GO" id="GO:0003735">
    <property type="term" value="F:structural constituent of ribosome"/>
    <property type="evidence" value="ECO:0007669"/>
    <property type="project" value="InterPro"/>
</dbReference>
<dbReference type="GO" id="GO:0046677">
    <property type="term" value="P:response to antibiotic"/>
    <property type="evidence" value="ECO:0007669"/>
    <property type="project" value="UniProtKB-KW"/>
</dbReference>
<dbReference type="GO" id="GO:0042274">
    <property type="term" value="P:ribosomal small subunit biogenesis"/>
    <property type="evidence" value="ECO:0007669"/>
    <property type="project" value="TreeGrafter"/>
</dbReference>
<dbReference type="GO" id="GO:0006412">
    <property type="term" value="P:translation"/>
    <property type="evidence" value="ECO:0007669"/>
    <property type="project" value="UniProtKB-UniRule"/>
</dbReference>
<dbReference type="CDD" id="cd00165">
    <property type="entry name" value="S4"/>
    <property type="match status" value="1"/>
</dbReference>
<dbReference type="FunFam" id="1.10.1050.10:FF:000001">
    <property type="entry name" value="30S ribosomal protein S4"/>
    <property type="match status" value="1"/>
</dbReference>
<dbReference type="FunFam" id="3.10.290.10:FF:000001">
    <property type="entry name" value="30S ribosomal protein S4"/>
    <property type="match status" value="1"/>
</dbReference>
<dbReference type="Gene3D" id="1.10.1050.10">
    <property type="entry name" value="Ribosomal Protein S4 Delta 41, Chain A, domain 1"/>
    <property type="match status" value="1"/>
</dbReference>
<dbReference type="Gene3D" id="3.10.290.10">
    <property type="entry name" value="RNA-binding S4 domain"/>
    <property type="match status" value="1"/>
</dbReference>
<dbReference type="HAMAP" id="MF_01306_B">
    <property type="entry name" value="Ribosomal_uS4_B"/>
    <property type="match status" value="1"/>
</dbReference>
<dbReference type="InterPro" id="IPR022801">
    <property type="entry name" value="Ribosomal_uS4"/>
</dbReference>
<dbReference type="InterPro" id="IPR005709">
    <property type="entry name" value="Ribosomal_uS4_bac-type"/>
</dbReference>
<dbReference type="InterPro" id="IPR018079">
    <property type="entry name" value="Ribosomal_uS4_CS"/>
</dbReference>
<dbReference type="InterPro" id="IPR001912">
    <property type="entry name" value="Ribosomal_uS4_N"/>
</dbReference>
<dbReference type="InterPro" id="IPR002942">
    <property type="entry name" value="S4_RNA-bd"/>
</dbReference>
<dbReference type="InterPro" id="IPR036986">
    <property type="entry name" value="S4_RNA-bd_sf"/>
</dbReference>
<dbReference type="NCBIfam" id="NF003717">
    <property type="entry name" value="PRK05327.1"/>
    <property type="match status" value="1"/>
</dbReference>
<dbReference type="NCBIfam" id="TIGR01017">
    <property type="entry name" value="rpsD_bact"/>
    <property type="match status" value="1"/>
</dbReference>
<dbReference type="PANTHER" id="PTHR11831">
    <property type="entry name" value="30S 40S RIBOSOMAL PROTEIN"/>
    <property type="match status" value="1"/>
</dbReference>
<dbReference type="PANTHER" id="PTHR11831:SF4">
    <property type="entry name" value="SMALL RIBOSOMAL SUBUNIT PROTEIN US4M"/>
    <property type="match status" value="1"/>
</dbReference>
<dbReference type="Pfam" id="PF00163">
    <property type="entry name" value="Ribosomal_S4"/>
    <property type="match status" value="1"/>
</dbReference>
<dbReference type="Pfam" id="PF01479">
    <property type="entry name" value="S4"/>
    <property type="match status" value="1"/>
</dbReference>
<dbReference type="SMART" id="SM01390">
    <property type="entry name" value="Ribosomal_S4"/>
    <property type="match status" value="1"/>
</dbReference>
<dbReference type="SMART" id="SM00363">
    <property type="entry name" value="S4"/>
    <property type="match status" value="1"/>
</dbReference>
<dbReference type="SUPFAM" id="SSF55174">
    <property type="entry name" value="Alpha-L RNA-binding motif"/>
    <property type="match status" value="1"/>
</dbReference>
<dbReference type="PROSITE" id="PS00632">
    <property type="entry name" value="RIBOSOMAL_S4"/>
    <property type="match status" value="1"/>
</dbReference>
<dbReference type="PROSITE" id="PS50889">
    <property type="entry name" value="S4"/>
    <property type="match status" value="1"/>
</dbReference>
<gene>
    <name type="primary">rpsD</name>
</gene>
<sequence length="200" mass="23196">MARYTGPMWKISRRLGISLSGTGKELQKRPYPPGQHGPGQRRKLSEYGLQLQEKQKLRHMYGVNERQFRKTFEEAGKMPGKHGENFMILLESRLDNLVYRLGLARTRRQARQLVTHGHIIVDGSRVNIPSYRVKPGQTIAVREKSRNLQVIKEALEANNYIPDYLSFDPEKMEGTYTRLPERSELPAEINEALIVEFYSR</sequence>
<evidence type="ECO:0000250" key="1"/>
<evidence type="ECO:0000256" key="2">
    <source>
        <dbReference type="SAM" id="MobiDB-lite"/>
    </source>
</evidence>
<evidence type="ECO:0000269" key="3">
    <source>
    </source>
</evidence>
<evidence type="ECO:0000269" key="4">
    <source>
    </source>
</evidence>
<evidence type="ECO:0000305" key="5"/>
<evidence type="ECO:0007829" key="6">
    <source>
        <dbReference type="PDB" id="1C05"/>
    </source>
</evidence>
<evidence type="ECO:0007829" key="7">
    <source>
        <dbReference type="PDB" id="1C06"/>
    </source>
</evidence>
<keyword id="KW-0002">3D-structure</keyword>
<keyword id="KW-0046">Antibiotic resistance</keyword>
<keyword id="KW-0903">Direct protein sequencing</keyword>
<keyword id="KW-0687">Ribonucleoprotein</keyword>
<keyword id="KW-0689">Ribosomal protein</keyword>
<keyword id="KW-0694">RNA-binding</keyword>
<keyword id="KW-0699">rRNA-binding</keyword>
<reference key="1">
    <citation type="journal article" date="1998" name="EMBO J.">
        <title>The crystal structure of ribosomal protein S4 reveals a two-domain molecule with an extensive RNA-binding surface: one domain shows structural homology to the ETS DNA-binding motif.</title>
        <authorList>
            <person name="Davies C."/>
            <person name="Gerstner R.B."/>
            <person name="Draper D.E."/>
            <person name="Ramakrishnan V."/>
            <person name="White S.W."/>
        </authorList>
    </citation>
    <scope>NUCLEOTIDE SEQUENCE [GENOMIC DNA]</scope>
    <scope>X-RAY CRYSTALLOGRAPHY (1.7 ANGSTROMS) OF 42-200</scope>
</reference>
<reference key="2">
    <citation type="journal article" date="1991" name="Biochimie">
        <title>Primary structures of ribosomal proteins from the archaebacterium Halobacterium marismortui and the eubacterium Bacillus stearothermophilus.</title>
        <authorList>
            <person name="Arndt E."/>
            <person name="Scholzen T."/>
            <person name="Kromer W."/>
            <person name="Hatakeyama T."/>
            <person name="Kimura M."/>
        </authorList>
    </citation>
    <scope>PROTEIN SEQUENCE OF 2-200</scope>
</reference>
<reference key="3">
    <citation type="journal article" date="1974" name="FEBS Lett.">
        <title>Procaryotic ribosomal proteins: N-terminal sequence homologies and structural correspondence of 30 S ribosomal proteins from Escherichia coli and Bacillus stearothermophilus.</title>
        <authorList>
            <person name="Yaguchi M."/>
            <person name="Matheson A.T."/>
            <person name="Visentin L.P."/>
        </authorList>
    </citation>
    <scope>PROTEIN SEQUENCE OF 2-16</scope>
    <source>
        <strain>DSM 13240 / CIP 106956 / 10</strain>
    </source>
</reference>
<reference key="4">
    <citation type="journal article" date="1990" name="J. Bacteriol.">
        <title>Isolation and characterization of Bacillus stearothermophilus 30S and 50S ribosomal protein mutations.</title>
        <authorList>
            <person name="Schnier J."/>
            <person name="Gewitz H.S."/>
            <person name="Behrens S.E."/>
            <person name="Lee A."/>
            <person name="Ginther C."/>
            <person name="Leighton T."/>
        </authorList>
    </citation>
    <scope>ISOLATION OF STREPTOMYCIN INDEPENDENT STRAINS</scope>
    <source>
        <strain>799</strain>
    </source>
</reference>
<reference key="5">
    <citation type="journal article" date="2001" name="Biochemistry">
        <title>Recognition of 16S rRNA by ribosomal protein S4 from Bacillus stearothermophilus.</title>
        <authorList>
            <person name="Gerstner R.B."/>
            <person name="Pak Y."/>
            <person name="Draper D.E."/>
        </authorList>
    </citation>
    <scope>BINDING TO RRNA</scope>
</reference>
<reference key="6">
    <citation type="journal article" date="1999" name="J. Mol. Biol.">
        <title>Refining the overall structure and subdomain orientation of ribosomal protein S4 delta41 with dipolar couplings measured by NMR in uniaxial liquid crystalline phases.</title>
        <authorList>
            <person name="Markus M.A."/>
            <person name="Gerstner R.B."/>
            <person name="Draper D.E."/>
            <person name="Torchia D.A."/>
        </authorList>
    </citation>
    <scope>STRUCTURE BY NMR OF 42-199</scope>
</reference>
<reference key="7">
    <citation type="journal article" date="2000" name="Biochemistry">
        <title>Structural preordering in the N-terminal region of ribosomal protein S4 revealed by heteronuclear NMR spectroscopy.</title>
        <authorList>
            <person name="Sayers E.W."/>
            <person name="Gerstner R.B."/>
            <person name="Draper D.E."/>
            <person name="Torchia D.A."/>
        </authorList>
    </citation>
    <scope>STRUCTURE BY NMR</scope>
</reference>
<organism>
    <name type="scientific">Geobacillus stearothermophilus</name>
    <name type="common">Bacillus stearothermophilus</name>
    <dbReference type="NCBI Taxonomy" id="1422"/>
    <lineage>
        <taxon>Bacteria</taxon>
        <taxon>Bacillati</taxon>
        <taxon>Bacillota</taxon>
        <taxon>Bacilli</taxon>
        <taxon>Bacillales</taxon>
        <taxon>Anoxybacillaceae</taxon>
        <taxon>Geobacillus</taxon>
    </lineage>
</organism>
<protein>
    <recommendedName>
        <fullName evidence="5">Small ribosomal subunit protein uS4</fullName>
    </recommendedName>
    <alternativeName>
        <fullName>30S ribosomal protein S4</fullName>
    </alternativeName>
    <alternativeName>
        <fullName>BS5</fullName>
    </alternativeName>
</protein>